<evidence type="ECO:0000250" key="1"/>
<evidence type="ECO:0000250" key="2">
    <source>
        <dbReference type="UniProtKB" id="P19267"/>
    </source>
</evidence>
<evidence type="ECO:0000305" key="3"/>
<comment type="function">
    <text evidence="2">Binds and compact DNA (95 to 150 base pairs) to form nucleosome-like structures that contain positive DNA supercoils. Increases the resistance of DNA to thermal denaturation (in vitro).</text>
</comment>
<comment type="subunit">
    <text evidence="2">Homodimer or heterodimer with another histone. Dimers then assemble into higher oligomers, with the DNA wrapped around the protein core (By similarity).</text>
</comment>
<comment type="subcellular location">
    <subcellularLocation>
        <location evidence="3">Cytoplasm</location>
    </subcellularLocation>
    <subcellularLocation>
        <location evidence="3">Chromosome</location>
    </subcellularLocation>
</comment>
<comment type="similarity">
    <text evidence="3">Belongs to the archaeal histone HMF family.</text>
</comment>
<feature type="initiator methionine" description="Removed" evidence="1">
    <location>
        <position position="1"/>
    </location>
</feature>
<feature type="chain" id="PRO_0000155003" description="Archaeal histone B">
    <location>
        <begin position="2"/>
        <end position="67"/>
    </location>
</feature>
<feature type="region of interest" description="Interaction with DNA" evidence="2">
    <location>
        <begin position="20"/>
        <end position="22"/>
    </location>
</feature>
<feature type="region of interest" description="Interaction with DNA" evidence="2">
    <location>
        <begin position="54"/>
        <end position="57"/>
    </location>
</feature>
<accession>P50486</accession>
<reference key="1">
    <citation type="journal article" date="1994" name="Gene">
        <title>Histone-encoding genes from Pyrococcus: evidence for members of the HMf family of archaeal histones in a non-methanogenic Archaeon.</title>
        <authorList>
            <person name="Sandman K.M."/>
            <person name="Perler F.B."/>
            <person name="Reeve J.N."/>
        </authorList>
    </citation>
    <scope>NUCLEOTIDE SEQUENCE [GENOMIC DNA]</scope>
</reference>
<protein>
    <recommendedName>
        <fullName>Archaeal histone B</fullName>
    </recommendedName>
    <alternativeName>
        <fullName>Archaeal histone A2</fullName>
    </alternativeName>
</protein>
<dbReference type="EMBL" id="U08838">
    <property type="protein sequence ID" value="AAA73427.1"/>
    <property type="molecule type" value="Genomic_DNA"/>
</dbReference>
<dbReference type="SMR" id="P50486"/>
<dbReference type="GO" id="GO:0005694">
    <property type="term" value="C:chromosome"/>
    <property type="evidence" value="ECO:0007669"/>
    <property type="project" value="UniProtKB-SubCell"/>
</dbReference>
<dbReference type="GO" id="GO:0005737">
    <property type="term" value="C:cytoplasm"/>
    <property type="evidence" value="ECO:0007669"/>
    <property type="project" value="UniProtKB-SubCell"/>
</dbReference>
<dbReference type="GO" id="GO:0003677">
    <property type="term" value="F:DNA binding"/>
    <property type="evidence" value="ECO:0007669"/>
    <property type="project" value="UniProtKB-KW"/>
</dbReference>
<dbReference type="GO" id="GO:0046982">
    <property type="term" value="F:protein heterodimerization activity"/>
    <property type="evidence" value="ECO:0007669"/>
    <property type="project" value="InterPro"/>
</dbReference>
<dbReference type="CDD" id="cd22909">
    <property type="entry name" value="HFD_archaea_histone-like"/>
    <property type="match status" value="1"/>
</dbReference>
<dbReference type="Gene3D" id="1.10.20.10">
    <property type="entry name" value="Histone, subunit A"/>
    <property type="match status" value="1"/>
</dbReference>
<dbReference type="InterPro" id="IPR050947">
    <property type="entry name" value="Archaeal_histone_HMF"/>
</dbReference>
<dbReference type="InterPro" id="IPR003958">
    <property type="entry name" value="CBFA_NFYB_domain"/>
</dbReference>
<dbReference type="InterPro" id="IPR009072">
    <property type="entry name" value="Histone-fold"/>
</dbReference>
<dbReference type="InterPro" id="IPR050004">
    <property type="entry name" value="HmfB-like"/>
</dbReference>
<dbReference type="InterPro" id="IPR004823">
    <property type="entry name" value="TAF_TATA-bd_Histone-like_dom"/>
</dbReference>
<dbReference type="NCBIfam" id="NF043032">
    <property type="entry name" value="archaea_histone"/>
    <property type="match status" value="1"/>
</dbReference>
<dbReference type="PANTHER" id="PTHR47828">
    <property type="entry name" value="ARCHAEAL HISTONE A"/>
    <property type="match status" value="1"/>
</dbReference>
<dbReference type="PANTHER" id="PTHR47828:SF1">
    <property type="entry name" value="ARCHAEAL HISTONE A"/>
    <property type="match status" value="1"/>
</dbReference>
<dbReference type="Pfam" id="PF00808">
    <property type="entry name" value="CBFD_NFYB_HMF"/>
    <property type="match status" value="1"/>
</dbReference>
<dbReference type="SMART" id="SM00803">
    <property type="entry name" value="TAF"/>
    <property type="match status" value="1"/>
</dbReference>
<dbReference type="SUPFAM" id="SSF47113">
    <property type="entry name" value="Histone-fold"/>
    <property type="match status" value="1"/>
</dbReference>
<proteinExistence type="inferred from homology"/>
<gene>
    <name type="primary">hpyA2</name>
</gene>
<keyword id="KW-0158">Chromosome</keyword>
<keyword id="KW-0963">Cytoplasm</keyword>
<keyword id="KW-0238">DNA-binding</keyword>
<name>HARB_PYRSG</name>
<sequence length="67" mass="7338">MAELPIAPVDRLIRKAGAQRVSEQAAKLLAEHLEEKALEIARKAVDLAKHAGRKTVKAEDIKLAIRS</sequence>
<organism>
    <name type="scientific">Pyrococcus sp. (strain GB-3a)</name>
    <dbReference type="NCBI Taxonomy" id="55399"/>
    <lineage>
        <taxon>Archaea</taxon>
        <taxon>Methanobacteriati</taxon>
        <taxon>Methanobacteriota</taxon>
        <taxon>Thermococci</taxon>
        <taxon>Thermococcales</taxon>
        <taxon>Thermococcaceae</taxon>
        <taxon>Pyrococcus</taxon>
    </lineage>
</organism>